<reference key="1">
    <citation type="journal article" date="2002" name="Eur. J. Hum. Genet.">
        <title>Three novel human VMD2-like genes are members of the evolutionary highly conserved RFP-TM family.</title>
        <authorList>
            <person name="Stoehr H."/>
            <person name="Marquardt A."/>
            <person name="Nanda I."/>
            <person name="Schmid M."/>
            <person name="Weber B.H.F."/>
        </authorList>
    </citation>
    <scope>NUCLEOTIDE SEQUENCE [MRNA]</scope>
    <scope>TISSUE SPECIFICITY</scope>
</reference>
<reference key="2">
    <citation type="journal article" date="2003" name="J. Biol. Chem.">
        <title>Structure-function analysis of the bestrophin family of anion channels.</title>
        <authorList>
            <person name="Tsunenari T."/>
            <person name="Sun H."/>
            <person name="Williams J."/>
            <person name="Cahill H."/>
            <person name="Smallwood P."/>
            <person name="Yau K.-W."/>
            <person name="Nathans J."/>
        </authorList>
    </citation>
    <scope>NUCLEOTIDE SEQUENCE [MRNA]</scope>
    <scope>FUNCTION</scope>
    <scope>CATALYTIC ACTIVITY</scope>
</reference>
<reference key="3">
    <citation type="journal article" date="2006" name="Nature">
        <title>The DNA sequence and biological annotation of human chromosome 1.</title>
        <authorList>
            <person name="Gregory S.G."/>
            <person name="Barlow K.F."/>
            <person name="McLay K.E."/>
            <person name="Kaul R."/>
            <person name="Swarbreck D."/>
            <person name="Dunham A."/>
            <person name="Scott C.E."/>
            <person name="Howe K.L."/>
            <person name="Woodfine K."/>
            <person name="Spencer C.C.A."/>
            <person name="Jones M.C."/>
            <person name="Gillson C."/>
            <person name="Searle S."/>
            <person name="Zhou Y."/>
            <person name="Kokocinski F."/>
            <person name="McDonald L."/>
            <person name="Evans R."/>
            <person name="Phillips K."/>
            <person name="Atkinson A."/>
            <person name="Cooper R."/>
            <person name="Jones C."/>
            <person name="Hall R.E."/>
            <person name="Andrews T.D."/>
            <person name="Lloyd C."/>
            <person name="Ainscough R."/>
            <person name="Almeida J.P."/>
            <person name="Ambrose K.D."/>
            <person name="Anderson F."/>
            <person name="Andrew R.W."/>
            <person name="Ashwell R.I.S."/>
            <person name="Aubin K."/>
            <person name="Babbage A.K."/>
            <person name="Bagguley C.L."/>
            <person name="Bailey J."/>
            <person name="Beasley H."/>
            <person name="Bethel G."/>
            <person name="Bird C.P."/>
            <person name="Bray-Allen S."/>
            <person name="Brown J.Y."/>
            <person name="Brown A.J."/>
            <person name="Buckley D."/>
            <person name="Burton J."/>
            <person name="Bye J."/>
            <person name="Carder C."/>
            <person name="Chapman J.C."/>
            <person name="Clark S.Y."/>
            <person name="Clarke G."/>
            <person name="Clee C."/>
            <person name="Cobley V."/>
            <person name="Collier R.E."/>
            <person name="Corby N."/>
            <person name="Coville G.J."/>
            <person name="Davies J."/>
            <person name="Deadman R."/>
            <person name="Dunn M."/>
            <person name="Earthrowl M."/>
            <person name="Ellington A.G."/>
            <person name="Errington H."/>
            <person name="Frankish A."/>
            <person name="Frankland J."/>
            <person name="French L."/>
            <person name="Garner P."/>
            <person name="Garnett J."/>
            <person name="Gay L."/>
            <person name="Ghori M.R.J."/>
            <person name="Gibson R."/>
            <person name="Gilby L.M."/>
            <person name="Gillett W."/>
            <person name="Glithero R.J."/>
            <person name="Grafham D.V."/>
            <person name="Griffiths C."/>
            <person name="Griffiths-Jones S."/>
            <person name="Grocock R."/>
            <person name="Hammond S."/>
            <person name="Harrison E.S.I."/>
            <person name="Hart E."/>
            <person name="Haugen E."/>
            <person name="Heath P.D."/>
            <person name="Holmes S."/>
            <person name="Holt K."/>
            <person name="Howden P.J."/>
            <person name="Hunt A.R."/>
            <person name="Hunt S.E."/>
            <person name="Hunter G."/>
            <person name="Isherwood J."/>
            <person name="James R."/>
            <person name="Johnson C."/>
            <person name="Johnson D."/>
            <person name="Joy A."/>
            <person name="Kay M."/>
            <person name="Kershaw J.K."/>
            <person name="Kibukawa M."/>
            <person name="Kimberley A.M."/>
            <person name="King A."/>
            <person name="Knights A.J."/>
            <person name="Lad H."/>
            <person name="Laird G."/>
            <person name="Lawlor S."/>
            <person name="Leongamornlert D.A."/>
            <person name="Lloyd D.M."/>
            <person name="Loveland J."/>
            <person name="Lovell J."/>
            <person name="Lush M.J."/>
            <person name="Lyne R."/>
            <person name="Martin S."/>
            <person name="Mashreghi-Mohammadi M."/>
            <person name="Matthews L."/>
            <person name="Matthews N.S.W."/>
            <person name="McLaren S."/>
            <person name="Milne S."/>
            <person name="Mistry S."/>
            <person name="Moore M.J.F."/>
            <person name="Nickerson T."/>
            <person name="O'Dell C.N."/>
            <person name="Oliver K."/>
            <person name="Palmeiri A."/>
            <person name="Palmer S.A."/>
            <person name="Parker A."/>
            <person name="Patel D."/>
            <person name="Pearce A.V."/>
            <person name="Peck A.I."/>
            <person name="Pelan S."/>
            <person name="Phelps K."/>
            <person name="Phillimore B.J."/>
            <person name="Plumb R."/>
            <person name="Rajan J."/>
            <person name="Raymond C."/>
            <person name="Rouse G."/>
            <person name="Saenphimmachak C."/>
            <person name="Sehra H.K."/>
            <person name="Sheridan E."/>
            <person name="Shownkeen R."/>
            <person name="Sims S."/>
            <person name="Skuce C.D."/>
            <person name="Smith M."/>
            <person name="Steward C."/>
            <person name="Subramanian S."/>
            <person name="Sycamore N."/>
            <person name="Tracey A."/>
            <person name="Tromans A."/>
            <person name="Van Helmond Z."/>
            <person name="Wall M."/>
            <person name="Wallis J.M."/>
            <person name="White S."/>
            <person name="Whitehead S.L."/>
            <person name="Wilkinson J.E."/>
            <person name="Willey D.L."/>
            <person name="Williams H."/>
            <person name="Wilming L."/>
            <person name="Wray P.W."/>
            <person name="Wu Z."/>
            <person name="Coulson A."/>
            <person name="Vaudin M."/>
            <person name="Sulston J.E."/>
            <person name="Durbin R.M."/>
            <person name="Hubbard T."/>
            <person name="Wooster R."/>
            <person name="Dunham I."/>
            <person name="Carter N.P."/>
            <person name="McVean G."/>
            <person name="Ross M.T."/>
            <person name="Harrow J."/>
            <person name="Olson M.V."/>
            <person name="Beck S."/>
            <person name="Rogers J."/>
            <person name="Bentley D.R."/>
        </authorList>
    </citation>
    <scope>NUCLEOTIDE SEQUENCE [LARGE SCALE GENOMIC DNA]</scope>
</reference>
<reference key="4">
    <citation type="journal article" date="2004" name="Genome Res.">
        <title>The status, quality, and expansion of the NIH full-length cDNA project: the Mammalian Gene Collection (MGC).</title>
        <authorList>
            <consortium name="The MGC Project Team"/>
        </authorList>
    </citation>
    <scope>NUCLEOTIDE SEQUENCE [LARGE SCALE MRNA]</scope>
</reference>
<reference key="5">
    <citation type="journal article" date="2008" name="Am. J. Physiol.">
        <title>Bestrophin Cl- channels are highly permeable to HCO3-.</title>
        <authorList>
            <person name="Qu Z."/>
            <person name="Hartzell H.C."/>
        </authorList>
    </citation>
    <scope>FUNCTION</scope>
    <scope>CATALYTIC ACTIVITY</scope>
</reference>
<comment type="function">
    <text evidence="4 5">Ligand-gated anion channel that allows the movement of anions across cell membranes when activated by Calcium (Ca2+) (PubMed:12907679, PubMed:18400985). Mediates the movement of hydrogencarbonate and chloride (PubMed:12907679, PubMed:18400985).</text>
</comment>
<comment type="catalytic activity">
    <reaction evidence="4 5">
        <text>chloride(in) = chloride(out)</text>
        <dbReference type="Rhea" id="RHEA:29823"/>
        <dbReference type="ChEBI" id="CHEBI:17996"/>
    </reaction>
</comment>
<comment type="catalytic activity">
    <reaction evidence="5">
        <text>hydrogencarbonate(in) = hydrogencarbonate(out)</text>
        <dbReference type="Rhea" id="RHEA:28695"/>
        <dbReference type="ChEBI" id="CHEBI:17544"/>
    </reaction>
</comment>
<comment type="subcellular location">
    <subcellularLocation>
        <location>Cell membrane</location>
        <topology>Multi-pass membrane protein</topology>
    </subcellularLocation>
</comment>
<comment type="tissue specificity">
    <text evidence="3">Predominantly found in colon and the weakly in fetal brain, spinal cord, retina, lung, trachea, testis and placenta.</text>
</comment>
<comment type="similarity">
    <text evidence="7">Belongs to the anion channel-forming bestrophin (TC 1.A.46) family. Calcium-sensitive chloride channel subfamily.</text>
</comment>
<keyword id="KW-0106">Calcium</keyword>
<keyword id="KW-1003">Cell membrane</keyword>
<keyword id="KW-0868">Chloride</keyword>
<keyword id="KW-0869">Chloride channel</keyword>
<keyword id="KW-0407">Ion channel</keyword>
<keyword id="KW-0406">Ion transport</keyword>
<keyword id="KW-0472">Membrane</keyword>
<keyword id="KW-0479">Metal-binding</keyword>
<keyword id="KW-1267">Proteomics identification</keyword>
<keyword id="KW-1185">Reference proteome</keyword>
<keyword id="KW-0812">Transmembrane</keyword>
<keyword id="KW-1133">Transmembrane helix</keyword>
<keyword id="KW-0813">Transport</keyword>
<evidence type="ECO:0000250" key="1">
    <source>
        <dbReference type="UniProtKB" id="O76090"/>
    </source>
</evidence>
<evidence type="ECO:0000256" key="2">
    <source>
        <dbReference type="SAM" id="MobiDB-lite"/>
    </source>
</evidence>
<evidence type="ECO:0000269" key="3">
    <source>
    </source>
</evidence>
<evidence type="ECO:0000269" key="4">
    <source>
    </source>
</evidence>
<evidence type="ECO:0000269" key="5">
    <source>
    </source>
</evidence>
<evidence type="ECO:0000303" key="6">
    <source>
    </source>
</evidence>
<evidence type="ECO:0000305" key="7"/>
<evidence type="ECO:0000312" key="8">
    <source>
        <dbReference type="HGNC" id="HGNC:17106"/>
    </source>
</evidence>
<gene>
    <name evidence="8" type="primary">BEST4</name>
    <name evidence="6" type="synonym">VMD2L2</name>
</gene>
<accession>Q8NFU0</accession>
<accession>Q5JR93</accession>
<protein>
    <recommendedName>
        <fullName evidence="7">Bestrophin-4</fullName>
    </recommendedName>
    <alternativeName>
        <fullName>Vitelliform macular dystrophy 2-like protein 2</fullName>
    </alternativeName>
</protein>
<proteinExistence type="evidence at protein level"/>
<dbReference type="EMBL" id="AF440757">
    <property type="protein sequence ID" value="AAM76996.1"/>
    <property type="molecule type" value="mRNA"/>
</dbReference>
<dbReference type="EMBL" id="AY515707">
    <property type="protein sequence ID" value="AAR99657.1"/>
    <property type="molecule type" value="mRNA"/>
</dbReference>
<dbReference type="EMBL" id="AL592166">
    <property type="status" value="NOT_ANNOTATED_CDS"/>
    <property type="molecule type" value="Genomic_DNA"/>
</dbReference>
<dbReference type="EMBL" id="BC101823">
    <property type="protein sequence ID" value="AAI01824.1"/>
    <property type="molecule type" value="mRNA"/>
</dbReference>
<dbReference type="CCDS" id="CCDS514.1"/>
<dbReference type="RefSeq" id="NP_695006.1">
    <property type="nucleotide sequence ID" value="NM_153274.3"/>
</dbReference>
<dbReference type="RefSeq" id="XP_016856511.1">
    <property type="nucleotide sequence ID" value="XM_017001022.1"/>
</dbReference>
<dbReference type="RefSeq" id="XP_016856512.1">
    <property type="nucleotide sequence ID" value="XM_017001023.2"/>
</dbReference>
<dbReference type="RefSeq" id="XP_024302135.1">
    <property type="nucleotide sequence ID" value="XM_024446367.1"/>
</dbReference>
<dbReference type="RefSeq" id="XP_047273777.1">
    <property type="nucleotide sequence ID" value="XM_047417821.1"/>
</dbReference>
<dbReference type="RefSeq" id="XP_047273779.1">
    <property type="nucleotide sequence ID" value="XM_047417823.1"/>
</dbReference>
<dbReference type="RefSeq" id="XP_054191945.1">
    <property type="nucleotide sequence ID" value="XM_054335970.1"/>
</dbReference>
<dbReference type="RefSeq" id="XP_054191946.1">
    <property type="nucleotide sequence ID" value="XM_054335971.1"/>
</dbReference>
<dbReference type="SMR" id="Q8NFU0"/>
<dbReference type="BioGRID" id="129314">
    <property type="interactions" value="1"/>
</dbReference>
<dbReference type="FunCoup" id="Q8NFU0">
    <property type="interactions" value="80"/>
</dbReference>
<dbReference type="IntAct" id="Q8NFU0">
    <property type="interactions" value="1"/>
</dbReference>
<dbReference type="MINT" id="Q8NFU0"/>
<dbReference type="STRING" id="9606.ENSP00000361281"/>
<dbReference type="TCDB" id="1.A.46.1.7">
    <property type="family name" value="the anion channel-forming bestrophin (bestrophin) family"/>
</dbReference>
<dbReference type="iPTMnet" id="Q8NFU0"/>
<dbReference type="PhosphoSitePlus" id="Q8NFU0"/>
<dbReference type="BioMuta" id="BEST4"/>
<dbReference type="DMDM" id="38503352"/>
<dbReference type="jPOST" id="Q8NFU0"/>
<dbReference type="MassIVE" id="Q8NFU0"/>
<dbReference type="PaxDb" id="9606-ENSP00000361281"/>
<dbReference type="PeptideAtlas" id="Q8NFU0"/>
<dbReference type="ProteomicsDB" id="73355"/>
<dbReference type="Antibodypedia" id="18506">
    <property type="antibodies" value="111 antibodies from 23 providers"/>
</dbReference>
<dbReference type="DNASU" id="266675"/>
<dbReference type="Ensembl" id="ENST00000372207.4">
    <property type="protein sequence ID" value="ENSP00000361281.3"/>
    <property type="gene ID" value="ENSG00000142959.6"/>
</dbReference>
<dbReference type="GeneID" id="266675"/>
<dbReference type="KEGG" id="hsa:266675"/>
<dbReference type="MANE-Select" id="ENST00000372207.4">
    <property type="protein sequence ID" value="ENSP00000361281.3"/>
    <property type="RefSeq nucleotide sequence ID" value="NM_153274.3"/>
    <property type="RefSeq protein sequence ID" value="NP_695006.1"/>
</dbReference>
<dbReference type="UCSC" id="uc001cmm.4">
    <property type="organism name" value="human"/>
</dbReference>
<dbReference type="AGR" id="HGNC:17106"/>
<dbReference type="CTD" id="266675"/>
<dbReference type="DisGeNET" id="266675"/>
<dbReference type="GeneCards" id="BEST4"/>
<dbReference type="HGNC" id="HGNC:17106">
    <property type="gene designation" value="BEST4"/>
</dbReference>
<dbReference type="HPA" id="ENSG00000142959">
    <property type="expression patterns" value="Tissue enhanced (choroid plexus, intestine)"/>
</dbReference>
<dbReference type="MIM" id="607336">
    <property type="type" value="gene"/>
</dbReference>
<dbReference type="neXtProt" id="NX_Q8NFU0"/>
<dbReference type="OpenTargets" id="ENSG00000142959"/>
<dbReference type="PharmGKB" id="PA162377520"/>
<dbReference type="VEuPathDB" id="HostDB:ENSG00000142959"/>
<dbReference type="eggNOG" id="KOG3547">
    <property type="taxonomic scope" value="Eukaryota"/>
</dbReference>
<dbReference type="GeneTree" id="ENSGT00940000160852"/>
<dbReference type="HOGENOM" id="CLU_018069_0_0_1"/>
<dbReference type="InParanoid" id="Q8NFU0"/>
<dbReference type="OMA" id="CQLISWP"/>
<dbReference type="OrthoDB" id="201595at2759"/>
<dbReference type="PAN-GO" id="Q8NFU0">
    <property type="GO annotations" value="0 GO annotations based on evolutionary models"/>
</dbReference>
<dbReference type="PhylomeDB" id="Q8NFU0"/>
<dbReference type="TreeFam" id="TF315803"/>
<dbReference type="PathwayCommons" id="Q8NFU0"/>
<dbReference type="Reactome" id="R-HSA-2672351">
    <property type="pathway name" value="Stimuli-sensing channels"/>
</dbReference>
<dbReference type="SignaLink" id="Q8NFU0"/>
<dbReference type="BioGRID-ORCS" id="266675">
    <property type="hits" value="31 hits in 1141 CRISPR screens"/>
</dbReference>
<dbReference type="ChiTaRS" id="BEST4">
    <property type="organism name" value="human"/>
</dbReference>
<dbReference type="GenomeRNAi" id="266675"/>
<dbReference type="Pharos" id="Q8NFU0">
    <property type="development level" value="Tbio"/>
</dbReference>
<dbReference type="PRO" id="PR:Q8NFU0"/>
<dbReference type="Proteomes" id="UP000005640">
    <property type="component" value="Chromosome 1"/>
</dbReference>
<dbReference type="RNAct" id="Q8NFU0">
    <property type="molecule type" value="protein"/>
</dbReference>
<dbReference type="Bgee" id="ENSG00000142959">
    <property type="expression patterns" value="Expressed in mucosa of transverse colon and 95 other cell types or tissues"/>
</dbReference>
<dbReference type="GO" id="GO:0034707">
    <property type="term" value="C:chloride channel complex"/>
    <property type="evidence" value="ECO:0007669"/>
    <property type="project" value="UniProtKB-KW"/>
</dbReference>
<dbReference type="GO" id="GO:0005886">
    <property type="term" value="C:plasma membrane"/>
    <property type="evidence" value="ECO:0007669"/>
    <property type="project" value="UniProtKB-SubCell"/>
</dbReference>
<dbReference type="GO" id="GO:0160133">
    <property type="term" value="F:bicarbonate channel activity"/>
    <property type="evidence" value="ECO:0000314"/>
    <property type="project" value="UniProtKB"/>
</dbReference>
<dbReference type="GO" id="GO:0005254">
    <property type="term" value="F:chloride channel activity"/>
    <property type="evidence" value="ECO:0000314"/>
    <property type="project" value="UniProtKB"/>
</dbReference>
<dbReference type="GO" id="GO:0005229">
    <property type="term" value="F:intracellularly calcium-gated chloride channel activity"/>
    <property type="evidence" value="ECO:0000314"/>
    <property type="project" value="UniProtKB"/>
</dbReference>
<dbReference type="GO" id="GO:0046872">
    <property type="term" value="F:metal ion binding"/>
    <property type="evidence" value="ECO:0007669"/>
    <property type="project" value="UniProtKB-KW"/>
</dbReference>
<dbReference type="InterPro" id="IPR000615">
    <property type="entry name" value="Bestrophin"/>
</dbReference>
<dbReference type="InterPro" id="IPR021134">
    <property type="entry name" value="Bestrophin-like"/>
</dbReference>
<dbReference type="PANTHER" id="PTHR10736">
    <property type="entry name" value="BESTROPHIN"/>
    <property type="match status" value="1"/>
</dbReference>
<dbReference type="PANTHER" id="PTHR10736:SF55">
    <property type="entry name" value="BESTROPHIN-4"/>
    <property type="match status" value="1"/>
</dbReference>
<dbReference type="Pfam" id="PF01062">
    <property type="entry name" value="Bestrophin"/>
    <property type="match status" value="1"/>
</dbReference>
<organism>
    <name type="scientific">Homo sapiens</name>
    <name type="common">Human</name>
    <dbReference type="NCBI Taxonomy" id="9606"/>
    <lineage>
        <taxon>Eukaryota</taxon>
        <taxon>Metazoa</taxon>
        <taxon>Chordata</taxon>
        <taxon>Craniata</taxon>
        <taxon>Vertebrata</taxon>
        <taxon>Euteleostomi</taxon>
        <taxon>Mammalia</taxon>
        <taxon>Eutheria</taxon>
        <taxon>Euarchontoglires</taxon>
        <taxon>Primates</taxon>
        <taxon>Haplorrhini</taxon>
        <taxon>Catarrhini</taxon>
        <taxon>Hominidae</taxon>
        <taxon>Homo</taxon>
    </lineage>
</organism>
<sequence length="473" mass="53497">MTVSYTLKVAEARFGGFSGLLLRWRGSIYKLLYKEFLLFGALYAVLSITYRLLLTQEQRYVYAQVARYCNRSADLIPLSFVLGFYVTLVVNRWWSQYTSIPLPDQLMCVISASVHGVDQRGRLLRRTLIRYANLASVLVLRSVSTRVLKRFPTMEHVVDAGFMSQEERKKFESLKSDFNKYWVPCVWFTNLAAQARRDGRIRDDIALCLLLEELNKYRAKCSMLFHYDWISIPLVYTQVVTIAVYSFFALSLVGRQFVEPEAGAAKPQKLLKPGQEPAPALGDPDMYVPLTTLLQFFFYAGWLKVAEQIINPFGEDDDDFETNQLIDRNLQVSLLSVDEMYQNLPPAEKDQYWDEDQPQPPYTVATAAESLRPSFLGSTFNLRMSDDPEQSLQVEASPGSGRPAPAAQTPLLGRFLGVGAPSPAISLRNFGRVRGTPRPPHLLRFRAEEGGDPEAAARIEEESAESGDEALEP</sequence>
<feature type="chain" id="PRO_0000143120" description="Bestrophin-4">
    <location>
        <begin position="1"/>
        <end position="473"/>
    </location>
</feature>
<feature type="topological domain" description="Cytoplasmic" evidence="1">
    <location>
        <begin position="1"/>
        <end position="31"/>
    </location>
</feature>
<feature type="transmembrane region" description="Helical" evidence="1">
    <location>
        <begin position="32"/>
        <end position="51"/>
    </location>
</feature>
<feature type="topological domain" description="Extracellular" evidence="1">
    <location>
        <begin position="52"/>
        <end position="60"/>
    </location>
</feature>
<feature type="transmembrane region" description="Helical" evidence="1">
    <location>
        <begin position="61"/>
        <end position="82"/>
    </location>
</feature>
<feature type="topological domain" description="Cytoplasmic" evidence="1">
    <location>
        <begin position="83"/>
        <end position="237"/>
    </location>
</feature>
<feature type="transmembrane region" description="Helical" evidence="1">
    <location>
        <begin position="238"/>
        <end position="255"/>
    </location>
</feature>
<feature type="topological domain" description="Extracellular" evidence="1">
    <location>
        <begin position="256"/>
        <end position="289"/>
    </location>
</feature>
<feature type="transmembrane region" description="Helical" evidence="1">
    <location>
        <begin position="290"/>
        <end position="303"/>
    </location>
</feature>
<feature type="topological domain" description="Cytoplasmic" evidence="1">
    <location>
        <begin position="304"/>
        <end position="473"/>
    </location>
</feature>
<feature type="region of interest" description="Disordered" evidence="2">
    <location>
        <begin position="379"/>
        <end position="408"/>
    </location>
</feature>
<feature type="region of interest" description="Disordered" evidence="2">
    <location>
        <begin position="428"/>
        <end position="473"/>
    </location>
</feature>
<feature type="compositionally biased region" description="Low complexity" evidence="2">
    <location>
        <begin position="396"/>
        <end position="407"/>
    </location>
</feature>
<feature type="compositionally biased region" description="Basic and acidic residues" evidence="2">
    <location>
        <begin position="445"/>
        <end position="461"/>
    </location>
</feature>
<feature type="compositionally biased region" description="Acidic residues" evidence="2">
    <location>
        <begin position="462"/>
        <end position="473"/>
    </location>
</feature>
<feature type="binding site" description="in other chain" evidence="1">
    <location>
        <position position="10"/>
    </location>
    <ligand>
        <name>Ca(2+)</name>
        <dbReference type="ChEBI" id="CHEBI:29108"/>
        <note>ligand shared between two neighboring subunits</note>
    </ligand>
</feature>
<feature type="binding site" evidence="1">
    <location>
        <position position="308"/>
    </location>
    <ligand>
        <name>Ca(2+)</name>
        <dbReference type="ChEBI" id="CHEBI:29108"/>
        <note>ligand shared between two neighboring subunits</note>
    </ligand>
</feature>
<feature type="binding site" evidence="1">
    <location>
        <position position="311"/>
    </location>
    <ligand>
        <name>Ca(2+)</name>
        <dbReference type="ChEBI" id="CHEBI:29108"/>
        <note>ligand shared between two neighboring subunits</note>
    </ligand>
</feature>
<feature type="binding site" evidence="1">
    <location>
        <position position="316"/>
    </location>
    <ligand>
        <name>Ca(2+)</name>
        <dbReference type="ChEBI" id="CHEBI:29108"/>
        <note>ligand shared between two neighboring subunits</note>
    </ligand>
</feature>
<feature type="binding site" evidence="1">
    <location>
        <position position="319"/>
    </location>
    <ligand>
        <name>Ca(2+)</name>
        <dbReference type="ChEBI" id="CHEBI:29108"/>
        <note>ligand shared between two neighboring subunits</note>
    </ligand>
</feature>
<feature type="sequence variant" id="VAR_048411" description="In dbSNP:rs16832245.">
    <original>Y</original>
    <variation>C</variation>
    <location>
        <position position="62"/>
    </location>
</feature>
<feature type="sequence variant" id="VAR_048412" description="In dbSNP:rs16832242.">
    <original>Y</original>
    <variation>S</variation>
    <location>
        <position position="217"/>
    </location>
</feature>
<feature type="sequence variant" id="VAR_048413" description="In dbSNP:rs16832241.">
    <original>Q</original>
    <variation>E</variation>
    <location>
        <position position="331"/>
    </location>
</feature>
<feature type="sequence variant" id="VAR_048414" description="In dbSNP:rs16832239.">
    <original>R</original>
    <variation>L</variation>
    <location>
        <position position="402"/>
    </location>
</feature>
<name>BEST4_HUMAN</name>